<gene>
    <name type="ordered locus">SaurJH1_2136</name>
</gene>
<dbReference type="EMBL" id="CP000736">
    <property type="protein sequence ID" value="ABR52965.1"/>
    <property type="molecule type" value="Genomic_DNA"/>
</dbReference>
<dbReference type="KEGG" id="sah:SaurJH1_2136"/>
<dbReference type="HOGENOM" id="CLU_123820_0_0_9"/>
<dbReference type="GO" id="GO:0005737">
    <property type="term" value="C:cytoplasm"/>
    <property type="evidence" value="ECO:0007669"/>
    <property type="project" value="UniProtKB-SubCell"/>
</dbReference>
<dbReference type="GO" id="GO:0008270">
    <property type="term" value="F:zinc ion binding"/>
    <property type="evidence" value="ECO:0007669"/>
    <property type="project" value="UniProtKB-UniRule"/>
</dbReference>
<dbReference type="GO" id="GO:0006950">
    <property type="term" value="P:response to stress"/>
    <property type="evidence" value="ECO:0007669"/>
    <property type="project" value="UniProtKB-ARBA"/>
</dbReference>
<dbReference type="HAMAP" id="MF_00745">
    <property type="entry name" value="SprT_like"/>
    <property type="match status" value="1"/>
</dbReference>
<dbReference type="InterPro" id="IPR006640">
    <property type="entry name" value="SprT-like_domain"/>
</dbReference>
<dbReference type="InterPro" id="IPR035240">
    <property type="entry name" value="SprT_Zn_ribbon"/>
</dbReference>
<dbReference type="InterPro" id="IPR023524">
    <property type="entry name" value="Uncharacterised_SprT-like"/>
</dbReference>
<dbReference type="NCBIfam" id="NF003339">
    <property type="entry name" value="PRK04351.1"/>
    <property type="match status" value="1"/>
</dbReference>
<dbReference type="Pfam" id="PF10263">
    <property type="entry name" value="SprT-like"/>
    <property type="match status" value="1"/>
</dbReference>
<dbReference type="Pfam" id="PF17283">
    <property type="entry name" value="Zn_ribbon_SprT"/>
    <property type="match status" value="1"/>
</dbReference>
<dbReference type="SMART" id="SM00731">
    <property type="entry name" value="SprT"/>
    <property type="match status" value="1"/>
</dbReference>
<comment type="cofactor">
    <cofactor evidence="1">
        <name>Zn(2+)</name>
        <dbReference type="ChEBI" id="CHEBI:29105"/>
    </cofactor>
    <text evidence="1">Binds 1 zinc ion.</text>
</comment>
<comment type="subcellular location">
    <subcellularLocation>
        <location evidence="1">Cytoplasm</location>
    </subcellularLocation>
</comment>
<comment type="similarity">
    <text evidence="1">Belongs to the SprT family.</text>
</comment>
<accession>A6U3E7</accession>
<protein>
    <recommendedName>
        <fullName evidence="1">Protein SprT-like</fullName>
    </recommendedName>
</protein>
<sequence length="151" mass="18186">MNNDKLQRMVENLSEEKFGRTFRHCAYFNKRLRTTGGRYLLKSHDIEINPKQYEHYGEDAVVKIILHELCHYHLHIAGKGYQHKDQDFKRLSQQVGAPRFCNSIESYQQRANYEYYCTKCHAKYIRIRKVDTNRMRCGHCNGKLRMKRQLK</sequence>
<keyword id="KW-0963">Cytoplasm</keyword>
<keyword id="KW-0479">Metal-binding</keyword>
<keyword id="KW-0862">Zinc</keyword>
<name>SPRTL_STAA2</name>
<organism>
    <name type="scientific">Staphylococcus aureus (strain JH1)</name>
    <dbReference type="NCBI Taxonomy" id="359787"/>
    <lineage>
        <taxon>Bacteria</taxon>
        <taxon>Bacillati</taxon>
        <taxon>Bacillota</taxon>
        <taxon>Bacilli</taxon>
        <taxon>Bacillales</taxon>
        <taxon>Staphylococcaceae</taxon>
        <taxon>Staphylococcus</taxon>
    </lineage>
</organism>
<feature type="chain" id="PRO_1000083477" description="Protein SprT-like">
    <location>
        <begin position="1"/>
        <end position="151"/>
    </location>
</feature>
<feature type="domain" description="SprT-like" evidence="1">
    <location>
        <begin position="6"/>
        <end position="147"/>
    </location>
</feature>
<feature type="active site" evidence="1">
    <location>
        <position position="68"/>
    </location>
</feature>
<feature type="binding site" evidence="1">
    <location>
        <position position="67"/>
    </location>
    <ligand>
        <name>Zn(2+)</name>
        <dbReference type="ChEBI" id="CHEBI:29105"/>
    </ligand>
</feature>
<feature type="binding site" evidence="1">
    <location>
        <position position="71"/>
    </location>
    <ligand>
        <name>Zn(2+)</name>
        <dbReference type="ChEBI" id="CHEBI:29105"/>
    </ligand>
</feature>
<proteinExistence type="inferred from homology"/>
<reference key="1">
    <citation type="submission" date="2007-06" db="EMBL/GenBank/DDBJ databases">
        <title>Complete sequence of chromosome of Staphylococcus aureus subsp. aureus JH1.</title>
        <authorList>
            <consortium name="US DOE Joint Genome Institute"/>
            <person name="Copeland A."/>
            <person name="Lucas S."/>
            <person name="Lapidus A."/>
            <person name="Barry K."/>
            <person name="Detter J.C."/>
            <person name="Glavina del Rio T."/>
            <person name="Hammon N."/>
            <person name="Israni S."/>
            <person name="Dalin E."/>
            <person name="Tice H."/>
            <person name="Pitluck S."/>
            <person name="Chain P."/>
            <person name="Malfatti S."/>
            <person name="Shin M."/>
            <person name="Vergez L."/>
            <person name="Schmutz J."/>
            <person name="Larimer F."/>
            <person name="Land M."/>
            <person name="Hauser L."/>
            <person name="Kyrpides N."/>
            <person name="Ivanova N."/>
            <person name="Tomasz A."/>
            <person name="Richardson P."/>
        </authorList>
    </citation>
    <scope>NUCLEOTIDE SEQUENCE [LARGE SCALE GENOMIC DNA]</scope>
    <source>
        <strain>JH1</strain>
    </source>
</reference>
<evidence type="ECO:0000255" key="1">
    <source>
        <dbReference type="HAMAP-Rule" id="MF_00745"/>
    </source>
</evidence>